<accession>Q3BRJ5</accession>
<organism>
    <name type="scientific">Xanthomonas euvesicatoria pv. vesicatoria (strain 85-10)</name>
    <name type="common">Xanthomonas campestris pv. vesicatoria</name>
    <dbReference type="NCBI Taxonomy" id="316273"/>
    <lineage>
        <taxon>Bacteria</taxon>
        <taxon>Pseudomonadati</taxon>
        <taxon>Pseudomonadota</taxon>
        <taxon>Gammaproteobacteria</taxon>
        <taxon>Lysobacterales</taxon>
        <taxon>Lysobacteraceae</taxon>
        <taxon>Xanthomonas</taxon>
    </lineage>
</organism>
<evidence type="ECO:0000255" key="1">
    <source>
        <dbReference type="HAMAP-Rule" id="MF_01865"/>
    </source>
</evidence>
<evidence type="ECO:0000255" key="2">
    <source>
        <dbReference type="PROSITE-ProRule" id="PRU01266"/>
    </source>
</evidence>
<reference key="1">
    <citation type="journal article" date="2005" name="J. Bacteriol.">
        <title>Insights into genome plasticity and pathogenicity of the plant pathogenic Bacterium Xanthomonas campestris pv. vesicatoria revealed by the complete genome sequence.</title>
        <authorList>
            <person name="Thieme F."/>
            <person name="Koebnik R."/>
            <person name="Bekel T."/>
            <person name="Berger C."/>
            <person name="Boch J."/>
            <person name="Buettner D."/>
            <person name="Caldana C."/>
            <person name="Gaigalat L."/>
            <person name="Goesmann A."/>
            <person name="Kay S."/>
            <person name="Kirchner O."/>
            <person name="Lanz C."/>
            <person name="Linke B."/>
            <person name="McHardy A.C."/>
            <person name="Meyer F."/>
            <person name="Mittenhuber G."/>
            <person name="Nies D.H."/>
            <person name="Niesbach-Kloesgen U."/>
            <person name="Patschkowski T."/>
            <person name="Rueckert C."/>
            <person name="Rupp O."/>
            <person name="Schneiker S."/>
            <person name="Schuster S.C."/>
            <person name="Vorhoelter F.J."/>
            <person name="Weber E."/>
            <person name="Puehler A."/>
            <person name="Bonas U."/>
            <person name="Bartels D."/>
            <person name="Kaiser O."/>
        </authorList>
    </citation>
    <scope>NUCLEOTIDE SEQUENCE [LARGE SCALE GENOMIC DNA]</scope>
    <source>
        <strain>85-10</strain>
    </source>
</reference>
<proteinExistence type="inferred from homology"/>
<gene>
    <name evidence="1" type="primary">rimO</name>
    <name type="ordered locus">XCV2887</name>
</gene>
<comment type="function">
    <text evidence="1">Catalyzes the methylthiolation of an aspartic acid residue of ribosomal protein uS12.</text>
</comment>
<comment type="catalytic activity">
    <reaction evidence="1">
        <text>L-aspartate(89)-[ribosomal protein uS12]-hydrogen + (sulfur carrier)-SH + AH2 + 2 S-adenosyl-L-methionine = 3-methylsulfanyl-L-aspartate(89)-[ribosomal protein uS12]-hydrogen + (sulfur carrier)-H + 5'-deoxyadenosine + L-methionine + A + S-adenosyl-L-homocysteine + 2 H(+)</text>
        <dbReference type="Rhea" id="RHEA:37087"/>
        <dbReference type="Rhea" id="RHEA-COMP:10460"/>
        <dbReference type="Rhea" id="RHEA-COMP:10461"/>
        <dbReference type="Rhea" id="RHEA-COMP:14737"/>
        <dbReference type="Rhea" id="RHEA-COMP:14739"/>
        <dbReference type="ChEBI" id="CHEBI:13193"/>
        <dbReference type="ChEBI" id="CHEBI:15378"/>
        <dbReference type="ChEBI" id="CHEBI:17319"/>
        <dbReference type="ChEBI" id="CHEBI:17499"/>
        <dbReference type="ChEBI" id="CHEBI:29917"/>
        <dbReference type="ChEBI" id="CHEBI:29961"/>
        <dbReference type="ChEBI" id="CHEBI:57844"/>
        <dbReference type="ChEBI" id="CHEBI:57856"/>
        <dbReference type="ChEBI" id="CHEBI:59789"/>
        <dbReference type="ChEBI" id="CHEBI:64428"/>
        <dbReference type="ChEBI" id="CHEBI:73599"/>
        <dbReference type="EC" id="2.8.4.4"/>
    </reaction>
</comment>
<comment type="cofactor">
    <cofactor evidence="1">
        <name>[4Fe-4S] cluster</name>
        <dbReference type="ChEBI" id="CHEBI:49883"/>
    </cofactor>
    <text evidence="1">Binds 2 [4Fe-4S] clusters. One cluster is coordinated with 3 cysteines and an exchangeable S-adenosyl-L-methionine.</text>
</comment>
<comment type="subcellular location">
    <subcellularLocation>
        <location evidence="1">Cytoplasm</location>
    </subcellularLocation>
</comment>
<comment type="similarity">
    <text evidence="1">Belongs to the methylthiotransferase family. RimO subfamily.</text>
</comment>
<dbReference type="EC" id="2.8.4.4" evidence="1"/>
<dbReference type="EMBL" id="AM039952">
    <property type="protein sequence ID" value="CAJ24566.1"/>
    <property type="molecule type" value="Genomic_DNA"/>
</dbReference>
<dbReference type="RefSeq" id="WP_011347963.1">
    <property type="nucleotide sequence ID" value="NZ_CP017190.1"/>
</dbReference>
<dbReference type="SMR" id="Q3BRJ5"/>
<dbReference type="STRING" id="456327.BJD11_08415"/>
<dbReference type="KEGG" id="xcv:XCV2887"/>
<dbReference type="eggNOG" id="COG0621">
    <property type="taxonomic scope" value="Bacteria"/>
</dbReference>
<dbReference type="HOGENOM" id="CLU_018697_0_0_6"/>
<dbReference type="Proteomes" id="UP000007069">
    <property type="component" value="Chromosome"/>
</dbReference>
<dbReference type="GO" id="GO:0005829">
    <property type="term" value="C:cytosol"/>
    <property type="evidence" value="ECO:0007669"/>
    <property type="project" value="TreeGrafter"/>
</dbReference>
<dbReference type="GO" id="GO:0051539">
    <property type="term" value="F:4 iron, 4 sulfur cluster binding"/>
    <property type="evidence" value="ECO:0007669"/>
    <property type="project" value="UniProtKB-UniRule"/>
</dbReference>
<dbReference type="GO" id="GO:0035599">
    <property type="term" value="F:aspartic acid methylthiotransferase activity"/>
    <property type="evidence" value="ECO:0007669"/>
    <property type="project" value="TreeGrafter"/>
</dbReference>
<dbReference type="GO" id="GO:0046872">
    <property type="term" value="F:metal ion binding"/>
    <property type="evidence" value="ECO:0007669"/>
    <property type="project" value="UniProtKB-KW"/>
</dbReference>
<dbReference type="GO" id="GO:0103039">
    <property type="term" value="F:protein methylthiotransferase activity"/>
    <property type="evidence" value="ECO:0007669"/>
    <property type="project" value="UniProtKB-EC"/>
</dbReference>
<dbReference type="GO" id="GO:0006400">
    <property type="term" value="P:tRNA modification"/>
    <property type="evidence" value="ECO:0007669"/>
    <property type="project" value="InterPro"/>
</dbReference>
<dbReference type="CDD" id="cd01335">
    <property type="entry name" value="Radical_SAM"/>
    <property type="match status" value="1"/>
</dbReference>
<dbReference type="FunFam" id="2.40.50.140:FF:000210">
    <property type="entry name" value="Ribosomal protein S12 methylthiotransferase RimO"/>
    <property type="match status" value="1"/>
</dbReference>
<dbReference type="FunFam" id="3.40.50.12160:FF:000002">
    <property type="entry name" value="Ribosomal protein S12 methylthiotransferase RimO"/>
    <property type="match status" value="1"/>
</dbReference>
<dbReference type="FunFam" id="3.80.30.20:FF:000001">
    <property type="entry name" value="tRNA-2-methylthio-N(6)-dimethylallyladenosine synthase 2"/>
    <property type="match status" value="1"/>
</dbReference>
<dbReference type="Gene3D" id="3.40.50.12160">
    <property type="entry name" value="Methylthiotransferase, N-terminal domain"/>
    <property type="match status" value="1"/>
</dbReference>
<dbReference type="Gene3D" id="2.40.50.140">
    <property type="entry name" value="Nucleic acid-binding proteins"/>
    <property type="match status" value="1"/>
</dbReference>
<dbReference type="Gene3D" id="3.80.30.20">
    <property type="entry name" value="tm_1862 like domain"/>
    <property type="match status" value="1"/>
</dbReference>
<dbReference type="HAMAP" id="MF_01865">
    <property type="entry name" value="MTTase_RimO"/>
    <property type="match status" value="1"/>
</dbReference>
<dbReference type="InterPro" id="IPR006638">
    <property type="entry name" value="Elp3/MiaA/NifB-like_rSAM"/>
</dbReference>
<dbReference type="InterPro" id="IPR005839">
    <property type="entry name" value="Methylthiotransferase"/>
</dbReference>
<dbReference type="InterPro" id="IPR020612">
    <property type="entry name" value="Methylthiotransferase_CS"/>
</dbReference>
<dbReference type="InterPro" id="IPR013848">
    <property type="entry name" value="Methylthiotransferase_N"/>
</dbReference>
<dbReference type="InterPro" id="IPR038135">
    <property type="entry name" value="Methylthiotransferase_N_sf"/>
</dbReference>
<dbReference type="InterPro" id="IPR012340">
    <property type="entry name" value="NA-bd_OB-fold"/>
</dbReference>
<dbReference type="InterPro" id="IPR005840">
    <property type="entry name" value="Ribosomal_uS12_MeSTrfase_RimO"/>
</dbReference>
<dbReference type="InterPro" id="IPR007197">
    <property type="entry name" value="rSAM"/>
</dbReference>
<dbReference type="InterPro" id="IPR023404">
    <property type="entry name" value="rSAM_horseshoe"/>
</dbReference>
<dbReference type="InterPro" id="IPR002792">
    <property type="entry name" value="TRAM_dom"/>
</dbReference>
<dbReference type="NCBIfam" id="TIGR01125">
    <property type="entry name" value="30S ribosomal protein S12 methylthiotransferase RimO"/>
    <property type="match status" value="1"/>
</dbReference>
<dbReference type="NCBIfam" id="TIGR00089">
    <property type="entry name" value="MiaB/RimO family radical SAM methylthiotransferase"/>
    <property type="match status" value="1"/>
</dbReference>
<dbReference type="PANTHER" id="PTHR43837">
    <property type="entry name" value="RIBOSOMAL PROTEIN S12 METHYLTHIOTRANSFERASE RIMO"/>
    <property type="match status" value="1"/>
</dbReference>
<dbReference type="PANTHER" id="PTHR43837:SF1">
    <property type="entry name" value="RIBOSOMAL PROTEIN US12 METHYLTHIOTRANSFERASE RIMO"/>
    <property type="match status" value="1"/>
</dbReference>
<dbReference type="Pfam" id="PF04055">
    <property type="entry name" value="Radical_SAM"/>
    <property type="match status" value="1"/>
</dbReference>
<dbReference type="Pfam" id="PF18693">
    <property type="entry name" value="TRAM_2"/>
    <property type="match status" value="1"/>
</dbReference>
<dbReference type="Pfam" id="PF00919">
    <property type="entry name" value="UPF0004"/>
    <property type="match status" value="1"/>
</dbReference>
<dbReference type="SFLD" id="SFLDG01082">
    <property type="entry name" value="B12-binding_domain_containing"/>
    <property type="match status" value="1"/>
</dbReference>
<dbReference type="SFLD" id="SFLDS00029">
    <property type="entry name" value="Radical_SAM"/>
    <property type="match status" value="1"/>
</dbReference>
<dbReference type="SFLD" id="SFLDF00274">
    <property type="entry name" value="ribosomal_protein_S12_methylth"/>
    <property type="match status" value="1"/>
</dbReference>
<dbReference type="SMART" id="SM00729">
    <property type="entry name" value="Elp3"/>
    <property type="match status" value="1"/>
</dbReference>
<dbReference type="SUPFAM" id="SSF102114">
    <property type="entry name" value="Radical SAM enzymes"/>
    <property type="match status" value="1"/>
</dbReference>
<dbReference type="PROSITE" id="PS51449">
    <property type="entry name" value="MTTASE_N"/>
    <property type="match status" value="1"/>
</dbReference>
<dbReference type="PROSITE" id="PS01278">
    <property type="entry name" value="MTTASE_RADICAL"/>
    <property type="match status" value="1"/>
</dbReference>
<dbReference type="PROSITE" id="PS51918">
    <property type="entry name" value="RADICAL_SAM"/>
    <property type="match status" value="1"/>
</dbReference>
<dbReference type="PROSITE" id="PS50926">
    <property type="entry name" value="TRAM"/>
    <property type="match status" value="1"/>
</dbReference>
<protein>
    <recommendedName>
        <fullName evidence="1">Ribosomal protein uS12 methylthiotransferase RimO</fullName>
        <shortName evidence="1">uS12 MTTase</shortName>
        <shortName evidence="1">uS12 methylthiotransferase</shortName>
        <ecNumber evidence="1">2.8.4.4</ecNumber>
    </recommendedName>
    <alternativeName>
        <fullName evidence="1">Ribosomal protein uS12 (aspartate-C(3))-methylthiotransferase</fullName>
    </alternativeName>
    <alternativeName>
        <fullName evidence="1">Ribosome maturation factor RimO</fullName>
    </alternativeName>
</protein>
<keyword id="KW-0004">4Fe-4S</keyword>
<keyword id="KW-0963">Cytoplasm</keyword>
<keyword id="KW-0408">Iron</keyword>
<keyword id="KW-0411">Iron-sulfur</keyword>
<keyword id="KW-0479">Metal-binding</keyword>
<keyword id="KW-0949">S-adenosyl-L-methionine</keyword>
<keyword id="KW-0808">Transferase</keyword>
<name>RIMO_XANE5</name>
<sequence>MSQLNPKVGFVSLGCPKALVDSERILTQLRVEGYDIVPSYDAADVVVVNTCGFIDSAVTESLDAIGEAMNANGKVIVTGCLGKRPEQIREAYPQVLAVSGPQDYQSVMEAVHAALPPRHDPFVDLVPDYGIKLTPRHYAYLKISEGCNHRCSFCIIPSMRGDLVSRPVDEVLREAERLVRGGVKELLVVSQDTSAYGVDLKYAERPWRDRMYQTRMKALCEGLSELGVWTRLHYVYPYPHVDDVIGLMAEGRLLPYLDIPFQHASPRILKLMKRPGAVEKTLERVQRWKAMCPEITVRSTFIVGFPGETDAEFESLLDFLDQAQLDRVGAFAYSPVDGASANALPDQVPEEVKHERLARFMAKQAQISALRLESKIGSVQQCLVDVIEDDIAVARSRADAPEIDGLVHIQNGGELGLKVGDLVDVEITDSDEHDLFGDALPSGPAVQQPGRTLNLQIV</sequence>
<feature type="chain" id="PRO_0000375073" description="Ribosomal protein uS12 methylthiotransferase RimO">
    <location>
        <begin position="1"/>
        <end position="458"/>
    </location>
</feature>
<feature type="domain" description="MTTase N-terminal" evidence="1">
    <location>
        <begin position="6"/>
        <end position="116"/>
    </location>
</feature>
<feature type="domain" description="Radical SAM core" evidence="2">
    <location>
        <begin position="133"/>
        <end position="371"/>
    </location>
</feature>
<feature type="domain" description="TRAM" evidence="1">
    <location>
        <begin position="373"/>
        <end position="441"/>
    </location>
</feature>
<feature type="binding site" evidence="1">
    <location>
        <position position="15"/>
    </location>
    <ligand>
        <name>[4Fe-4S] cluster</name>
        <dbReference type="ChEBI" id="CHEBI:49883"/>
        <label>1</label>
    </ligand>
</feature>
<feature type="binding site" evidence="1">
    <location>
        <position position="51"/>
    </location>
    <ligand>
        <name>[4Fe-4S] cluster</name>
        <dbReference type="ChEBI" id="CHEBI:49883"/>
        <label>1</label>
    </ligand>
</feature>
<feature type="binding site" evidence="1">
    <location>
        <position position="80"/>
    </location>
    <ligand>
        <name>[4Fe-4S] cluster</name>
        <dbReference type="ChEBI" id="CHEBI:49883"/>
        <label>1</label>
    </ligand>
</feature>
<feature type="binding site" evidence="1">
    <location>
        <position position="147"/>
    </location>
    <ligand>
        <name>[4Fe-4S] cluster</name>
        <dbReference type="ChEBI" id="CHEBI:49883"/>
        <label>2</label>
        <note>4Fe-4S-S-AdoMet</note>
    </ligand>
</feature>
<feature type="binding site" evidence="1">
    <location>
        <position position="151"/>
    </location>
    <ligand>
        <name>[4Fe-4S] cluster</name>
        <dbReference type="ChEBI" id="CHEBI:49883"/>
        <label>2</label>
        <note>4Fe-4S-S-AdoMet</note>
    </ligand>
</feature>
<feature type="binding site" evidence="1">
    <location>
        <position position="154"/>
    </location>
    <ligand>
        <name>[4Fe-4S] cluster</name>
        <dbReference type="ChEBI" id="CHEBI:49883"/>
        <label>2</label>
        <note>4Fe-4S-S-AdoMet</note>
    </ligand>
</feature>